<organism>
    <name type="scientific">Bacillus subtilis (strain 168)</name>
    <dbReference type="NCBI Taxonomy" id="224308"/>
    <lineage>
        <taxon>Bacteria</taxon>
        <taxon>Bacillati</taxon>
        <taxon>Bacillota</taxon>
        <taxon>Bacilli</taxon>
        <taxon>Bacillales</taxon>
        <taxon>Bacillaceae</taxon>
        <taxon>Bacillus</taxon>
    </lineage>
</organism>
<gene>
    <name type="primary">yoqK</name>
    <name type="ordered locus">BSU20600</name>
</gene>
<dbReference type="EMBL" id="AL009126">
    <property type="protein sequence ID" value="CAB13952.1"/>
    <property type="molecule type" value="Genomic_DNA"/>
</dbReference>
<dbReference type="RefSeq" id="NP_389942.1">
    <property type="nucleotide sequence ID" value="NC_000964.3"/>
</dbReference>
<dbReference type="RefSeq" id="WP_010886544.1">
    <property type="nucleotide sequence ID" value="NZ_OZ025638.1"/>
</dbReference>
<dbReference type="FunCoup" id="O34326">
    <property type="interactions" value="23"/>
</dbReference>
<dbReference type="STRING" id="224308.BSU20600"/>
<dbReference type="PaxDb" id="224308-BSU20600"/>
<dbReference type="EnsemblBacteria" id="CAB13952">
    <property type="protein sequence ID" value="CAB13952"/>
    <property type="gene ID" value="BSU_20600"/>
</dbReference>
<dbReference type="GeneID" id="940015"/>
<dbReference type="KEGG" id="bsu:BSU20600"/>
<dbReference type="InParanoid" id="O34326"/>
<dbReference type="OrthoDB" id="2889997at2"/>
<dbReference type="BioCyc" id="BSUB:BSU20600-MONOMER"/>
<dbReference type="Proteomes" id="UP000001570">
    <property type="component" value="Chromosome"/>
</dbReference>
<keyword id="KW-1185">Reference proteome</keyword>
<name>YOQK_BACSU</name>
<accession>O34326</accession>
<feature type="chain" id="PRO_0000369124" description="SPbeta prophage-derived uncharacterized protein YoqK">
    <location>
        <begin position="1"/>
        <end position="67"/>
    </location>
</feature>
<protein>
    <recommendedName>
        <fullName>SPbeta prophage-derived uncharacterized protein YoqK</fullName>
    </recommendedName>
</protein>
<proteinExistence type="predicted"/>
<reference key="1">
    <citation type="journal article" date="1997" name="Nature">
        <title>The complete genome sequence of the Gram-positive bacterium Bacillus subtilis.</title>
        <authorList>
            <person name="Kunst F."/>
            <person name="Ogasawara N."/>
            <person name="Moszer I."/>
            <person name="Albertini A.M."/>
            <person name="Alloni G."/>
            <person name="Azevedo V."/>
            <person name="Bertero M.G."/>
            <person name="Bessieres P."/>
            <person name="Bolotin A."/>
            <person name="Borchert S."/>
            <person name="Borriss R."/>
            <person name="Boursier L."/>
            <person name="Brans A."/>
            <person name="Braun M."/>
            <person name="Brignell S.C."/>
            <person name="Bron S."/>
            <person name="Brouillet S."/>
            <person name="Bruschi C.V."/>
            <person name="Caldwell B."/>
            <person name="Capuano V."/>
            <person name="Carter N.M."/>
            <person name="Choi S.-K."/>
            <person name="Codani J.-J."/>
            <person name="Connerton I.F."/>
            <person name="Cummings N.J."/>
            <person name="Daniel R.A."/>
            <person name="Denizot F."/>
            <person name="Devine K.M."/>
            <person name="Duesterhoeft A."/>
            <person name="Ehrlich S.D."/>
            <person name="Emmerson P.T."/>
            <person name="Entian K.-D."/>
            <person name="Errington J."/>
            <person name="Fabret C."/>
            <person name="Ferrari E."/>
            <person name="Foulger D."/>
            <person name="Fritz C."/>
            <person name="Fujita M."/>
            <person name="Fujita Y."/>
            <person name="Fuma S."/>
            <person name="Galizzi A."/>
            <person name="Galleron N."/>
            <person name="Ghim S.-Y."/>
            <person name="Glaser P."/>
            <person name="Goffeau A."/>
            <person name="Golightly E.J."/>
            <person name="Grandi G."/>
            <person name="Guiseppi G."/>
            <person name="Guy B.J."/>
            <person name="Haga K."/>
            <person name="Haiech J."/>
            <person name="Harwood C.R."/>
            <person name="Henaut A."/>
            <person name="Hilbert H."/>
            <person name="Holsappel S."/>
            <person name="Hosono S."/>
            <person name="Hullo M.-F."/>
            <person name="Itaya M."/>
            <person name="Jones L.-M."/>
            <person name="Joris B."/>
            <person name="Karamata D."/>
            <person name="Kasahara Y."/>
            <person name="Klaerr-Blanchard M."/>
            <person name="Klein C."/>
            <person name="Kobayashi Y."/>
            <person name="Koetter P."/>
            <person name="Koningstein G."/>
            <person name="Krogh S."/>
            <person name="Kumano M."/>
            <person name="Kurita K."/>
            <person name="Lapidus A."/>
            <person name="Lardinois S."/>
            <person name="Lauber J."/>
            <person name="Lazarevic V."/>
            <person name="Lee S.-M."/>
            <person name="Levine A."/>
            <person name="Liu H."/>
            <person name="Masuda S."/>
            <person name="Mauel C."/>
            <person name="Medigue C."/>
            <person name="Medina N."/>
            <person name="Mellado R.P."/>
            <person name="Mizuno M."/>
            <person name="Moestl D."/>
            <person name="Nakai S."/>
            <person name="Noback M."/>
            <person name="Noone D."/>
            <person name="O'Reilly M."/>
            <person name="Ogawa K."/>
            <person name="Ogiwara A."/>
            <person name="Oudega B."/>
            <person name="Park S.-H."/>
            <person name="Parro V."/>
            <person name="Pohl T.M."/>
            <person name="Portetelle D."/>
            <person name="Porwollik S."/>
            <person name="Prescott A.M."/>
            <person name="Presecan E."/>
            <person name="Pujic P."/>
            <person name="Purnelle B."/>
            <person name="Rapoport G."/>
            <person name="Rey M."/>
            <person name="Reynolds S."/>
            <person name="Rieger M."/>
            <person name="Rivolta C."/>
            <person name="Rocha E."/>
            <person name="Roche B."/>
            <person name="Rose M."/>
            <person name="Sadaie Y."/>
            <person name="Sato T."/>
            <person name="Scanlan E."/>
            <person name="Schleich S."/>
            <person name="Schroeter R."/>
            <person name="Scoffone F."/>
            <person name="Sekiguchi J."/>
            <person name="Sekowska A."/>
            <person name="Seror S.J."/>
            <person name="Serror P."/>
            <person name="Shin B.-S."/>
            <person name="Soldo B."/>
            <person name="Sorokin A."/>
            <person name="Tacconi E."/>
            <person name="Takagi T."/>
            <person name="Takahashi H."/>
            <person name="Takemaru K."/>
            <person name="Takeuchi M."/>
            <person name="Tamakoshi A."/>
            <person name="Tanaka T."/>
            <person name="Terpstra P."/>
            <person name="Tognoni A."/>
            <person name="Tosato V."/>
            <person name="Uchiyama S."/>
            <person name="Vandenbol M."/>
            <person name="Vannier F."/>
            <person name="Vassarotti A."/>
            <person name="Viari A."/>
            <person name="Wambutt R."/>
            <person name="Wedler E."/>
            <person name="Wedler H."/>
            <person name="Weitzenegger T."/>
            <person name="Winters P."/>
            <person name="Wipat A."/>
            <person name="Yamamoto H."/>
            <person name="Yamane K."/>
            <person name="Yasumoto K."/>
            <person name="Yata K."/>
            <person name="Yoshida K."/>
            <person name="Yoshikawa H.-F."/>
            <person name="Zumstein E."/>
            <person name="Yoshikawa H."/>
            <person name="Danchin A."/>
        </authorList>
    </citation>
    <scope>NUCLEOTIDE SEQUENCE [LARGE SCALE GENOMIC DNA]</scope>
    <source>
        <strain>168</strain>
    </source>
</reference>
<sequence>MKLIEERTYEERLYIYSDDIEARKHFVSELKPKGWMVDNCWVGIDLNQIKQFYRFKRELTDDYVFNR</sequence>